<name>MCP_SAGMY</name>
<gene>
    <name type="primary">CD46</name>
    <name type="synonym">MCP</name>
</gene>
<accession>O19124</accession>
<accession>O62684</accession>
<reference key="1">
    <citation type="journal article" date="1997" name="J. Virol.">
        <title>Artificial mutations and natural variations in the CD46 molecules from human and monkey cells define regions important for measles virus binding.</title>
        <authorList>
            <person name="Hsu E.C."/>
            <person name="Doerig R.E."/>
            <person name="Sarangi F."/>
            <person name="Marcil A."/>
            <person name="Iorio C."/>
            <person name="Richardson C.D."/>
        </authorList>
    </citation>
    <scope>NUCLEOTIDE SEQUENCE [MRNA] (ISOFORM 2)</scope>
    <source>
        <tissue>Lymphocyte</tissue>
    </source>
</reference>
<reference key="2">
    <citation type="journal article" date="1998" name="J. Virol.">
        <title>A single amino acid change in the hemagglutinin protein of measles virus determines its ability to bind CD46 and reveals another receptor on marmoset B cells.</title>
        <authorList>
            <person name="Hsu E.C."/>
            <person name="Sarangi F."/>
            <person name="Iorio C."/>
            <person name="Sidhu M.S."/>
            <person name="Udem S.A."/>
            <person name="Dillehay D.L."/>
            <person name="Xu W."/>
            <person name="Rota P.A."/>
            <person name="Bellini W.J."/>
            <person name="Richardson C.D."/>
        </authorList>
    </citation>
    <scope>NUCLEOTIDE SEQUENCE [MRNA] OF 1-186 (ISOFORM 1)</scope>
    <source>
        <tissue>B-cell</tissue>
    </source>
</reference>
<keyword id="KW-0025">Alternative splicing</keyword>
<keyword id="KW-0180">Complement pathway</keyword>
<keyword id="KW-0968">Cytoplasmic vesicle</keyword>
<keyword id="KW-1015">Disulfide bond</keyword>
<keyword id="KW-0278">Fertilization</keyword>
<keyword id="KW-0325">Glycoprotein</keyword>
<keyword id="KW-0391">Immunity</keyword>
<keyword id="KW-0399">Innate immunity</keyword>
<keyword id="KW-0472">Membrane</keyword>
<keyword id="KW-0677">Repeat</keyword>
<keyword id="KW-0732">Signal</keyword>
<keyword id="KW-0768">Sushi</keyword>
<dbReference type="EMBL" id="U87918">
    <property type="protein sequence ID" value="AAB66818.1"/>
    <property type="molecule type" value="mRNA"/>
</dbReference>
<dbReference type="EMBL" id="AF025482">
    <property type="protein sequence ID" value="AAC39670.1"/>
    <property type="molecule type" value="mRNA"/>
</dbReference>
<dbReference type="SMR" id="O19124"/>
<dbReference type="GlyCosmos" id="O19124">
    <property type="glycosylation" value="3 sites, No reported glycans"/>
</dbReference>
<dbReference type="GO" id="GO:0009986">
    <property type="term" value="C:cell surface"/>
    <property type="evidence" value="ECO:0007669"/>
    <property type="project" value="InterPro"/>
</dbReference>
<dbReference type="GO" id="GO:0002079">
    <property type="term" value="C:inner acrosomal membrane"/>
    <property type="evidence" value="ECO:0007669"/>
    <property type="project" value="UniProtKB-SubCell"/>
</dbReference>
<dbReference type="GO" id="GO:0006958">
    <property type="term" value="P:complement activation, classical pathway"/>
    <property type="evidence" value="ECO:0007669"/>
    <property type="project" value="UniProtKB-KW"/>
</dbReference>
<dbReference type="GO" id="GO:0045087">
    <property type="term" value="P:innate immune response"/>
    <property type="evidence" value="ECO:0007669"/>
    <property type="project" value="UniProtKB-KW"/>
</dbReference>
<dbReference type="GO" id="GO:0007338">
    <property type="term" value="P:single fertilization"/>
    <property type="evidence" value="ECO:0007669"/>
    <property type="project" value="UniProtKB-KW"/>
</dbReference>
<dbReference type="CDD" id="cd00033">
    <property type="entry name" value="CCP"/>
    <property type="match status" value="4"/>
</dbReference>
<dbReference type="FunFam" id="2.10.70.10:FF:000014">
    <property type="entry name" value="Membrane cofactor protein"/>
    <property type="match status" value="1"/>
</dbReference>
<dbReference type="FunFam" id="2.10.70.10:FF:000042">
    <property type="entry name" value="Membrane cofactor protein"/>
    <property type="match status" value="1"/>
</dbReference>
<dbReference type="Gene3D" id="2.10.70.10">
    <property type="entry name" value="Complement Module, domain 1"/>
    <property type="match status" value="4"/>
</dbReference>
<dbReference type="InterPro" id="IPR017341">
    <property type="entry name" value="CD46"/>
</dbReference>
<dbReference type="InterPro" id="IPR050350">
    <property type="entry name" value="Compl-Cell_Adhes-Reg"/>
</dbReference>
<dbReference type="InterPro" id="IPR035976">
    <property type="entry name" value="Sushi/SCR/CCP_sf"/>
</dbReference>
<dbReference type="InterPro" id="IPR000436">
    <property type="entry name" value="Sushi_SCR_CCP_dom"/>
</dbReference>
<dbReference type="PANTHER" id="PTHR19325">
    <property type="entry name" value="COMPLEMENT COMPONENT-RELATED SUSHI DOMAIN-CONTAINING"/>
    <property type="match status" value="1"/>
</dbReference>
<dbReference type="PANTHER" id="PTHR19325:SF521">
    <property type="entry name" value="MEMBRANE COFACTOR PROTEIN"/>
    <property type="match status" value="1"/>
</dbReference>
<dbReference type="Pfam" id="PF00084">
    <property type="entry name" value="Sushi"/>
    <property type="match status" value="4"/>
</dbReference>
<dbReference type="PIRSF" id="PIRSF037971">
    <property type="entry name" value="TLX_CD46"/>
    <property type="match status" value="1"/>
</dbReference>
<dbReference type="SMART" id="SM00032">
    <property type="entry name" value="CCP"/>
    <property type="match status" value="4"/>
</dbReference>
<dbReference type="SUPFAM" id="SSF57535">
    <property type="entry name" value="Complement control module/SCR domain"/>
    <property type="match status" value="4"/>
</dbReference>
<dbReference type="PROSITE" id="PS50923">
    <property type="entry name" value="SUSHI"/>
    <property type="match status" value="4"/>
</dbReference>
<protein>
    <recommendedName>
        <fullName>Membrane cofactor protein</fullName>
    </recommendedName>
    <cdAntigenName>CD46</cdAntigenName>
</protein>
<feature type="signal peptide" evidence="3">
    <location>
        <begin position="1"/>
        <end position="32"/>
    </location>
</feature>
<feature type="chain" id="PRO_0000238975" description="Membrane cofactor protein">
    <location>
        <begin position="33"/>
        <end position="285"/>
    </location>
</feature>
<feature type="domain" description="Sushi 1" evidence="4">
    <location>
        <begin position="33"/>
        <end position="96"/>
    </location>
</feature>
<feature type="domain" description="Sushi 2" evidence="4">
    <location>
        <begin position="97"/>
        <end position="159"/>
    </location>
</feature>
<feature type="domain" description="Sushi 3" evidence="4">
    <location>
        <begin position="160"/>
        <end position="225"/>
    </location>
</feature>
<feature type="domain" description="Sushi 4" evidence="4">
    <location>
        <begin position="226"/>
        <end position="285"/>
    </location>
</feature>
<feature type="glycosylation site" description="O-linked (GalNAc...) threonine" evidence="3">
    <location>
        <position position="40"/>
    </location>
</feature>
<feature type="glycosylation site" description="O-linked (GalNAc...) threonine" evidence="3">
    <location>
        <position position="47"/>
    </location>
</feature>
<feature type="glycosylation site" description="N-linked (GlcNAc...) asparagine" evidence="3">
    <location>
        <position position="114"/>
    </location>
</feature>
<feature type="disulfide bond" evidence="4">
    <location>
        <begin position="35"/>
        <end position="80"/>
    </location>
</feature>
<feature type="disulfide bond" evidence="4">
    <location>
        <begin position="64"/>
        <end position="94"/>
    </location>
</feature>
<feature type="disulfide bond" evidence="4">
    <location>
        <begin position="99"/>
        <end position="141"/>
    </location>
</feature>
<feature type="disulfide bond" evidence="4">
    <location>
        <begin position="127"/>
        <end position="157"/>
    </location>
</feature>
<feature type="disulfide bond" evidence="4">
    <location>
        <begin position="162"/>
        <end position="210"/>
    </location>
</feature>
<feature type="disulfide bond" evidence="4">
    <location>
        <begin position="191"/>
        <end position="223"/>
    </location>
</feature>
<feature type="disulfide bond" evidence="4">
    <location>
        <begin position="228"/>
        <end position="270"/>
    </location>
</feature>
<feature type="disulfide bond" evidence="4">
    <location>
        <begin position="256"/>
        <end position="283"/>
    </location>
</feature>
<feature type="splice variant" id="VSP_019041" description="In isoform 2." evidence="5">
    <original>D</original>
    <variation>G</variation>
    <location>
        <position position="33"/>
    </location>
</feature>
<feature type="splice variant" id="VSP_019042" description="In isoform 2." evidence="5">
    <location>
        <begin position="34"/>
        <end position="96"/>
    </location>
</feature>
<feature type="non-terminal residue">
    <location>
        <position position="285"/>
    </location>
</feature>
<proteinExistence type="evidence at transcript level"/>
<comment type="function">
    <text evidence="1">Acts as a cofactor for complement factor I, a serine protease which protects autologous cells against complement-mediated injury by cleaving C3b and C4b deposited on host tissue. May be involved in the fusion of the spermatozoa with the oocyte during fertilization. Also acts as a costimulatory factor for T-cells which induces the differentiation of CD4+ into T-regulatory 1 cells. T-regulatory 1 cells suppress immune responses by secreting interleukin-10, and therefore are thought to prevent autoimmunity (By similarity).</text>
</comment>
<comment type="subunit">
    <text evidence="2">Interacts with C3b. Interacts with C4b. Interacts with moesin/MSN.</text>
</comment>
<comment type="subcellular location">
    <subcellularLocation>
        <location evidence="1">Cytoplasmic vesicle</location>
        <location evidence="1">Secretory vesicle</location>
        <location evidence="1">Acrosome inner membrane</location>
        <topology evidence="1">Single-pass type I membrane protein</topology>
    </subcellularLocation>
    <text evidence="1">Inner acrosomal membrane of spermatozoa.</text>
</comment>
<comment type="alternative products">
    <event type="alternative splicing"/>
    <isoform>
        <id>O19124-1</id>
        <name>1</name>
        <sequence type="displayed"/>
    </isoform>
    <isoform>
        <id>O19124-2</id>
        <name>2</name>
        <sequence type="described" ref="VSP_019041 VSP_019042"/>
    </isoform>
</comment>
<comment type="domain">
    <text evidence="1">Sushi domains 3 and 4 are the most important for interaction with C3b and C4b.</text>
</comment>
<sequence>MAPPSRRECPSPSWRFPGLLLAALVLLRSSCSDACGPPPTFEAMELTSRPKPYYKVGERVEYDCKKGYHHFAPFLTHSICDRNHTWLPISDEPCVRKVCHYIPNPLHGEAILANGSYSFGNQLHFICNDGYYLIGKEILYCELKGSDAVWSGRPPICQKILCKPPPKINNGKHTFSDVDVFEYLDAVTYSCDPAPGPDPFSLIGESTIYCRDNSVWSGDAPECKVVKCRFPVIENGKQIAGFGKKFYYKATVIFECDEGFHIIGSDTIVCNSNSTWDPPVPKCVK</sequence>
<evidence type="ECO:0000250" key="1"/>
<evidence type="ECO:0000250" key="2">
    <source>
        <dbReference type="UniProtKB" id="P15529"/>
    </source>
</evidence>
<evidence type="ECO:0000255" key="3"/>
<evidence type="ECO:0000255" key="4">
    <source>
        <dbReference type="PROSITE-ProRule" id="PRU00302"/>
    </source>
</evidence>
<evidence type="ECO:0000303" key="5">
    <source>
    </source>
</evidence>
<organism>
    <name type="scientific">Saguinus mystax</name>
    <name type="common">Moustached tamarin</name>
    <dbReference type="NCBI Taxonomy" id="9488"/>
    <lineage>
        <taxon>Eukaryota</taxon>
        <taxon>Metazoa</taxon>
        <taxon>Chordata</taxon>
        <taxon>Craniata</taxon>
        <taxon>Vertebrata</taxon>
        <taxon>Euteleostomi</taxon>
        <taxon>Mammalia</taxon>
        <taxon>Eutheria</taxon>
        <taxon>Euarchontoglires</taxon>
        <taxon>Primates</taxon>
        <taxon>Haplorrhini</taxon>
        <taxon>Platyrrhini</taxon>
        <taxon>Cebidae</taxon>
        <taxon>Callitrichinae</taxon>
        <taxon>Saguinus</taxon>
    </lineage>
</organism>